<sequence>MKIGIVTGIPGVGKSTVLAKVKEILDNQGINNKIINYGDFMLATALKLGYAKDRDEMRKLSVEKQKKLQIDAAKGIAEEARAGGEGYLFIDTHAVIRTPSGYLPGLPSYVITEINPSVIFLLEADPKIILSRQKRDTTRNRNDYSDESVILETINFARYAATASAVLAGSTVKVIVNVEGDPSIAANEIIRSMK</sequence>
<proteinExistence type="evidence at protein level"/>
<gene>
    <name type="primary">adkA</name>
    <name type="synonym">adk</name>
    <name type="ordered locus">Saci_0573</name>
</gene>
<feature type="chain" id="PRO_0000131825" description="Adenylate kinase">
    <location>
        <begin position="1"/>
        <end position="194"/>
    </location>
</feature>
<feature type="binding site">
    <location>
        <begin position="8"/>
        <end position="16"/>
    </location>
    <ligand>
        <name>ATP</name>
        <dbReference type="ChEBI" id="CHEBI:30616"/>
    </ligand>
</feature>
<feature type="strand" evidence="2">
    <location>
        <begin position="2"/>
        <end position="8"/>
    </location>
</feature>
<feature type="helix" evidence="2">
    <location>
        <begin position="14"/>
        <end position="26"/>
    </location>
</feature>
<feature type="turn" evidence="2">
    <location>
        <begin position="27"/>
        <end position="29"/>
    </location>
</feature>
<feature type="strand" evidence="2">
    <location>
        <begin position="32"/>
        <end position="36"/>
    </location>
</feature>
<feature type="helix" evidence="2">
    <location>
        <begin position="37"/>
        <end position="46"/>
    </location>
</feature>
<feature type="turn" evidence="2">
    <location>
        <begin position="47"/>
        <end position="49"/>
    </location>
</feature>
<feature type="helix" evidence="2">
    <location>
        <begin position="54"/>
        <end position="57"/>
    </location>
</feature>
<feature type="helix" evidence="2">
    <location>
        <begin position="62"/>
        <end position="82"/>
    </location>
</feature>
<feature type="strand" evidence="2">
    <location>
        <begin position="85"/>
        <end position="92"/>
    </location>
</feature>
<feature type="strand" evidence="2">
    <location>
        <begin position="94"/>
        <end position="98"/>
    </location>
</feature>
<feature type="strand" evidence="2">
    <location>
        <begin position="101"/>
        <end position="106"/>
    </location>
</feature>
<feature type="helix" evidence="2">
    <location>
        <begin position="108"/>
        <end position="114"/>
    </location>
</feature>
<feature type="strand" evidence="2">
    <location>
        <begin position="117"/>
        <end position="123"/>
    </location>
</feature>
<feature type="helix" evidence="2">
    <location>
        <begin position="126"/>
        <end position="135"/>
    </location>
</feature>
<feature type="turn" evidence="2">
    <location>
        <begin position="137"/>
        <end position="139"/>
    </location>
</feature>
<feature type="helix" evidence="2">
    <location>
        <begin position="147"/>
        <end position="168"/>
    </location>
</feature>
<feature type="strand" evidence="2">
    <location>
        <begin position="171"/>
        <end position="176"/>
    </location>
</feature>
<feature type="helix" evidence="2">
    <location>
        <begin position="183"/>
        <end position="193"/>
    </location>
</feature>
<protein>
    <recommendedName>
        <fullName>Adenylate kinase</fullName>
        <shortName>AK</shortName>
        <ecNumber>2.7.4.3</ecNumber>
    </recommendedName>
    <alternativeName>
        <fullName>ATP-AMP transphosphorylase</fullName>
    </alternativeName>
</protein>
<organism>
    <name type="scientific">Sulfolobus acidocaldarius (strain ATCC 33909 / DSM 639 / JCM 8929 / NBRC 15157 / NCIMB 11770)</name>
    <dbReference type="NCBI Taxonomy" id="330779"/>
    <lineage>
        <taxon>Archaea</taxon>
        <taxon>Thermoproteota</taxon>
        <taxon>Thermoprotei</taxon>
        <taxon>Sulfolobales</taxon>
        <taxon>Sulfolobaceae</taxon>
        <taxon>Sulfolobus</taxon>
    </lineage>
</organism>
<evidence type="ECO:0000305" key="1"/>
<evidence type="ECO:0007829" key="2">
    <source>
        <dbReference type="PDB" id="1NKS"/>
    </source>
</evidence>
<name>KADA_SULAC</name>
<reference key="1">
    <citation type="journal article" date="1993" name="Arch. Biochem. Biophys.">
        <title>Identification, cloning, and expression of the gene for adenylate kinase from the thermoacidophilic archaebacterium Sulfolobus acidocaldarius.</title>
        <authorList>
            <person name="Kath T."/>
            <person name="Schmid R."/>
            <person name="Schaefer G."/>
        </authorList>
    </citation>
    <scope>NUCLEOTIDE SEQUENCE [GENOMIC DNA]</scope>
    <source>
        <strain>ATCC 33909 / DSM 639 / JCM 8929 / NBRC 15157 / NCIMB 11770</strain>
    </source>
</reference>
<reference key="2">
    <citation type="journal article" date="2005" name="J. Bacteriol.">
        <title>The genome of Sulfolobus acidocaldarius, a model organism of the Crenarchaeota.</title>
        <authorList>
            <person name="Chen L."/>
            <person name="Bruegger K."/>
            <person name="Skovgaard M."/>
            <person name="Redder P."/>
            <person name="She Q."/>
            <person name="Torarinsson E."/>
            <person name="Greve B."/>
            <person name="Awayez M."/>
            <person name="Zibat A."/>
            <person name="Klenk H.-P."/>
            <person name="Garrett R.A."/>
        </authorList>
    </citation>
    <scope>NUCLEOTIDE SEQUENCE [LARGE SCALE GENOMIC DNA]</scope>
    <source>
        <strain>ATCC 33909 / DSM 639 / JCM 8929 / NBRC 15157 / NCIMB 11770</strain>
    </source>
</reference>
<reference key="3">
    <citation type="journal article" date="1993" name="Arch. Biochem. Biophys.">
        <title>Archaebacterial adenylate kinase from the thermoacidophile Sulfolobus acidocaldarius: purification, characterization, and partial sequence.</title>
        <authorList>
            <person name="Lacher K."/>
            <person name="Schaefer G."/>
        </authorList>
    </citation>
    <scope>PROTEIN SEQUENCE OF 1-41</scope>
    <scope>CHARACTERIZATION</scope>
    <source>
        <strain>ATCC 33909 / DSM 639 / JCM 8929 / NBRC 15157 / NCIMB 11770</strain>
    </source>
</reference>
<reference key="4">
    <citation type="journal article" date="1999" name="Mol. Phylogenet. Evol.">
        <title>The structure and evolution of the ribosomal proteins encoded in the spc operon of the archaeon (Crenarchaeota) Sulfolobus acidocaldarius.</title>
        <authorList>
            <person name="Yang D."/>
            <person name="Kusser I."/>
            <person name="Koepke A.K."/>
            <person name="Koop B.F."/>
            <person name="Matheson A.T."/>
        </authorList>
    </citation>
    <scope>NUCLEOTIDE SEQUENCE [GENOMIC DNA] OF 1-9</scope>
    <source>
        <strain>ATCC 33909 / DSM 639 / JCM 8929 / NBRC 15157 / NCIMB 11770</strain>
    </source>
</reference>
<reference key="5">
    <citation type="journal article" date="1995" name="Biochim. Biophys. Acta">
        <title>A secY homologous gene in the crenarchaeon Sulfolobus acidocaldarius.</title>
        <authorList>
            <person name="Kath T."/>
            <person name="Schaefer G."/>
        </authorList>
    </citation>
    <scope>NUCLEOTIDE SEQUENCE [GENOMIC DNA] OF 1-6</scope>
    <source>
        <strain>ATCC 33909 / DSM 639 / JCM 8929 / NBRC 15157 / NCIMB 11770</strain>
    </source>
</reference>
<reference key="6">
    <citation type="journal article" date="1998" name="J. Mol. Biol.">
        <title>The structure of a trimeric archaeal adenylate kinase.</title>
        <authorList>
            <person name="Vonrhein C."/>
            <person name="Boenisch H."/>
            <person name="Schaefer G."/>
            <person name="Schulz G.E."/>
        </authorList>
    </citation>
    <scope>X-RAY CRYSTALLOGRAPHY (2.57 ANGSTROMS)</scope>
</reference>
<keyword id="KW-0002">3D-structure</keyword>
<keyword id="KW-0067">ATP-binding</keyword>
<keyword id="KW-0963">Cytoplasm</keyword>
<keyword id="KW-0903">Direct protein sequencing</keyword>
<keyword id="KW-0418">Kinase</keyword>
<keyword id="KW-0547">Nucleotide-binding</keyword>
<keyword id="KW-1185">Reference proteome</keyword>
<keyword id="KW-0808">Transferase</keyword>
<dbReference type="EC" id="2.7.4.3"/>
<dbReference type="EMBL" id="X73564">
    <property type="protein sequence ID" value="CAA51967.1"/>
    <property type="molecule type" value="Genomic_DNA"/>
</dbReference>
<dbReference type="EMBL" id="CP000077">
    <property type="protein sequence ID" value="AAY79965.1"/>
    <property type="molecule type" value="Genomic_DNA"/>
</dbReference>
<dbReference type="EMBL" id="Y07778">
    <property type="protein sequence ID" value="CAA69101.1"/>
    <property type="molecule type" value="Genomic_DNA"/>
</dbReference>
<dbReference type="RefSeq" id="WP_011277467.1">
    <property type="nucleotide sequence ID" value="NC_007181.1"/>
</dbReference>
<dbReference type="PDB" id="1NKS">
    <property type="method" value="X-ray"/>
    <property type="resolution" value="2.57 A"/>
    <property type="chains" value="A/B/C/D/E/F=1-194"/>
</dbReference>
<dbReference type="PDBsum" id="1NKS"/>
<dbReference type="SMR" id="P35028"/>
<dbReference type="STRING" id="330779.Saci_0573"/>
<dbReference type="GeneID" id="14551094"/>
<dbReference type="KEGG" id="sai:Saci_0573"/>
<dbReference type="PATRIC" id="fig|330779.12.peg.552"/>
<dbReference type="eggNOG" id="arCOG01039">
    <property type="taxonomic scope" value="Archaea"/>
</dbReference>
<dbReference type="HOGENOM" id="CLU_119371_0_0_2"/>
<dbReference type="BRENDA" id="2.7.4.3">
    <property type="organism ID" value="6160"/>
</dbReference>
<dbReference type="EvolutionaryTrace" id="P35028"/>
<dbReference type="Proteomes" id="UP000001018">
    <property type="component" value="Chromosome"/>
</dbReference>
<dbReference type="GO" id="GO:0005737">
    <property type="term" value="C:cytoplasm"/>
    <property type="evidence" value="ECO:0007669"/>
    <property type="project" value="UniProtKB-SubCell"/>
</dbReference>
<dbReference type="GO" id="GO:0004017">
    <property type="term" value="F:adenylate kinase activity"/>
    <property type="evidence" value="ECO:0007669"/>
    <property type="project" value="UniProtKB-UniRule"/>
</dbReference>
<dbReference type="GO" id="GO:0005524">
    <property type="term" value="F:ATP binding"/>
    <property type="evidence" value="ECO:0007669"/>
    <property type="project" value="UniProtKB-UniRule"/>
</dbReference>
<dbReference type="Gene3D" id="3.40.50.300">
    <property type="entry name" value="P-loop containing nucleotide triphosphate hydrolases"/>
    <property type="match status" value="1"/>
</dbReference>
<dbReference type="HAMAP" id="MF_00234">
    <property type="entry name" value="Adenylate_kinase_AdkA"/>
    <property type="match status" value="1"/>
</dbReference>
<dbReference type="InterPro" id="IPR023477">
    <property type="entry name" value="Adenylate_kinase_AdkA"/>
</dbReference>
<dbReference type="InterPro" id="IPR027417">
    <property type="entry name" value="P-loop_NTPase"/>
</dbReference>
<dbReference type="NCBIfam" id="NF003122">
    <property type="entry name" value="PRK04040.1"/>
    <property type="match status" value="1"/>
</dbReference>
<dbReference type="Pfam" id="PF13207">
    <property type="entry name" value="AAA_17"/>
    <property type="match status" value="1"/>
</dbReference>
<dbReference type="SUPFAM" id="SSF52540">
    <property type="entry name" value="P-loop containing nucleoside triphosphate hydrolases"/>
    <property type="match status" value="1"/>
</dbReference>
<accession>P35028</accession>
<accession>Q4JB64</accession>
<comment type="catalytic activity">
    <reaction>
        <text>AMP + ATP = 2 ADP</text>
        <dbReference type="Rhea" id="RHEA:12973"/>
        <dbReference type="ChEBI" id="CHEBI:30616"/>
        <dbReference type="ChEBI" id="CHEBI:456215"/>
        <dbReference type="ChEBI" id="CHEBI:456216"/>
        <dbReference type="EC" id="2.7.4.3"/>
    </reaction>
</comment>
<comment type="subunit">
    <text>Homotrimer.</text>
</comment>
<comment type="subcellular location">
    <subcellularLocation>
        <location>Cytoplasm</location>
    </subcellularLocation>
</comment>
<comment type="similarity">
    <text evidence="1">Belongs to the archaeal adenylate kinase family.</text>
</comment>